<name>ANM7_AEDAE</name>
<proteinExistence type="inferred from homology"/>
<evidence type="ECO:0000250" key="1"/>
<evidence type="ECO:0000255" key="2">
    <source>
        <dbReference type="PROSITE-ProRule" id="PRU01015"/>
    </source>
</evidence>
<dbReference type="EC" id="2.1.1.-"/>
<dbReference type="EMBL" id="CH477810">
    <property type="protein sequence ID" value="EAT36004.1"/>
    <property type="molecule type" value="Genomic_DNA"/>
</dbReference>
<dbReference type="RefSeq" id="XP_001662010.1">
    <property type="nucleotide sequence ID" value="XM_001661960.1"/>
</dbReference>
<dbReference type="SMR" id="Q16NS8"/>
<dbReference type="FunCoup" id="Q16NS8">
    <property type="interactions" value="2014"/>
</dbReference>
<dbReference type="STRING" id="7159.Q16NS8"/>
<dbReference type="PaxDb" id="7159-AAEL011877-PA"/>
<dbReference type="GeneID" id="5575498"/>
<dbReference type="KEGG" id="aag:5575498"/>
<dbReference type="VEuPathDB" id="VectorBase:AAEL011877"/>
<dbReference type="eggNOG" id="KOG1501">
    <property type="taxonomic scope" value="Eukaryota"/>
</dbReference>
<dbReference type="HOGENOM" id="CLU_015180_0_0_1"/>
<dbReference type="InParanoid" id="Q16NS8"/>
<dbReference type="OMA" id="CHHDEYS"/>
<dbReference type="OrthoDB" id="412876at2759"/>
<dbReference type="PhylomeDB" id="Q16NS8"/>
<dbReference type="Proteomes" id="UP000008820">
    <property type="component" value="Unassembled WGS sequence"/>
</dbReference>
<dbReference type="Proteomes" id="UP000682892">
    <property type="component" value="Unassembled WGS sequence"/>
</dbReference>
<dbReference type="GO" id="GO:0042054">
    <property type="term" value="F:histone methyltransferase activity"/>
    <property type="evidence" value="ECO:0007669"/>
    <property type="project" value="TreeGrafter"/>
</dbReference>
<dbReference type="GO" id="GO:0035243">
    <property type="term" value="F:protein-arginine omega-N symmetric methyltransferase activity"/>
    <property type="evidence" value="ECO:0000250"/>
    <property type="project" value="UniProtKB"/>
</dbReference>
<dbReference type="GO" id="GO:0018216">
    <property type="term" value="P:peptidyl-arginine methylation"/>
    <property type="evidence" value="ECO:0000250"/>
    <property type="project" value="UniProtKB"/>
</dbReference>
<dbReference type="CDD" id="cd02440">
    <property type="entry name" value="AdoMet_MTases"/>
    <property type="match status" value="1"/>
</dbReference>
<dbReference type="FunFam" id="2.70.160.11:FF:000014">
    <property type="entry name" value="Protein arginine N-methyltransferase 7"/>
    <property type="match status" value="1"/>
</dbReference>
<dbReference type="FunFam" id="2.70.160.11:FF:000019">
    <property type="entry name" value="Protein arginine N-methyltransferase 7"/>
    <property type="match status" value="1"/>
</dbReference>
<dbReference type="FunFam" id="3.40.50.150:FF:000070">
    <property type="entry name" value="Protein arginine N-methyltransferase 7"/>
    <property type="match status" value="1"/>
</dbReference>
<dbReference type="FunFam" id="3.40.50.150:FF:000071">
    <property type="entry name" value="Protein arginine N-methyltransferase 7"/>
    <property type="match status" value="1"/>
</dbReference>
<dbReference type="Gene3D" id="2.70.160.11">
    <property type="entry name" value="Hnrnp arginine n-methyltransferase1"/>
    <property type="match status" value="2"/>
</dbReference>
<dbReference type="Gene3D" id="3.40.50.150">
    <property type="entry name" value="Vaccinia Virus protein VP39"/>
    <property type="match status" value="2"/>
</dbReference>
<dbReference type="InterPro" id="IPR025799">
    <property type="entry name" value="Arg_MeTrfase"/>
</dbReference>
<dbReference type="InterPro" id="IPR014644">
    <property type="entry name" value="MeTrfase_PRMT7"/>
</dbReference>
<dbReference type="InterPro" id="IPR055135">
    <property type="entry name" value="PRMT_dom"/>
</dbReference>
<dbReference type="InterPro" id="IPR029063">
    <property type="entry name" value="SAM-dependent_MTases_sf"/>
</dbReference>
<dbReference type="PANTHER" id="PTHR11006">
    <property type="entry name" value="PROTEIN ARGININE N-METHYLTRANSFERASE"/>
    <property type="match status" value="1"/>
</dbReference>
<dbReference type="PANTHER" id="PTHR11006:SF4">
    <property type="entry name" value="PROTEIN ARGININE N-METHYLTRANSFERASE 7"/>
    <property type="match status" value="1"/>
</dbReference>
<dbReference type="Pfam" id="PF06325">
    <property type="entry name" value="PrmA"/>
    <property type="match status" value="1"/>
</dbReference>
<dbReference type="Pfam" id="PF22528">
    <property type="entry name" value="PRMT_C"/>
    <property type="match status" value="1"/>
</dbReference>
<dbReference type="PIRSF" id="PIRSF036946">
    <property type="entry name" value="Arg_N-mtase"/>
    <property type="match status" value="1"/>
</dbReference>
<dbReference type="SUPFAM" id="SSF53335">
    <property type="entry name" value="S-adenosyl-L-methionine-dependent methyltransferases"/>
    <property type="match status" value="2"/>
</dbReference>
<dbReference type="PROSITE" id="PS51678">
    <property type="entry name" value="SAM_MT_PRMT"/>
    <property type="match status" value="2"/>
</dbReference>
<protein>
    <recommendedName>
        <fullName>Protein arginine N-methyltransferase 7</fullName>
        <ecNumber>2.1.1.-</ecNumber>
    </recommendedName>
</protein>
<comment type="function">
    <text evidence="1">Essential arginine methyltransferase that can both catalyze the formation of omega-N monomethylarginine (MMA) and symmetrical dimethylarginine (sDMA). Specifically mediates the symmetrical dimethylation of arginine residues in the small nuclear ribonucleoproteins SmD1 and SmD3 (By similarity).</text>
</comment>
<comment type="similarity">
    <text evidence="2">Belongs to the class I-like SAM-binding methyltransferase superfamily. Protein arginine N-methyltransferase family. PRMT7 subfamily.</text>
</comment>
<accession>Q16NS8</accession>
<keyword id="KW-0489">Methyltransferase</keyword>
<keyword id="KW-1185">Reference proteome</keyword>
<keyword id="KW-0677">Repeat</keyword>
<keyword id="KW-0949">S-adenosyl-L-methionine</keyword>
<keyword id="KW-0808">Transferase</keyword>
<gene>
    <name type="primary">Art7</name>
    <name type="ORF">AAEL011877</name>
</gene>
<sequence length="686" mass="77396">MHSDSDDYFSGDDDDFDRQQEIARSAFADMCHDWERNQKYDRALQLTIERLHCEGKEAHVLDIGTGSGLLSMMAVRAGADSVTACEAFRPMADCAERVIASNGMGDRIRLVKKKSTELKVGAGKDMERKANVLVTELFDTELIGEGAIATYRHALQFLLEEGCRVIPDKATVFAQVVECPLAMSWQTPKLLCSSDGDVLLRVPEEMVNCRGSSAVFDVQLSQLPLESFNALSEPIPVFEFDWSSREALKFKRHSRNLLKVQSSGIPQAVFMWWDLKMDLEGTVLLSCAPFWAHPDFEGLKTQKQNDSIPEPNLIPWRDHWMQAIYFLPHSKTPLAKGEEIALDAFHDEFSWWFGLNDLSLDPGHCSCGMHIAYSRSRIGQLNDGPRNKRILNYLEEVLDKNSVVLVLGDGSLLGLSIRAMGAKKVILVETNQTSRHCMERFVEHNGLENVEILSCLDDLTPDATADITHIFGEPFFTSAILPWENAIQFIWELNRVKALLNHEVSVIPHSFSIYGVAVEFLDLQKISAPLGTCEGFDLSLMDRMIEEHSKVADSPVEAQPLWEYPCLPLGPKCKMITINVAEGSQNQLEQGKITLTRHHEIKECNGIALWAEWHMGKNVSPKNTISSGPLSVIDEASELPVRPLQWNSNWRQGVHLLRKPLEESKMFLSWTVKYNAQLKTCYFKFD</sequence>
<reference key="1">
    <citation type="journal article" date="2007" name="Science">
        <title>Genome sequence of Aedes aegypti, a major arbovirus vector.</title>
        <authorList>
            <person name="Nene V."/>
            <person name="Wortman J.R."/>
            <person name="Lawson D."/>
            <person name="Haas B.J."/>
            <person name="Kodira C.D."/>
            <person name="Tu Z.J."/>
            <person name="Loftus B.J."/>
            <person name="Xi Z."/>
            <person name="Megy K."/>
            <person name="Grabherr M."/>
            <person name="Ren Q."/>
            <person name="Zdobnov E.M."/>
            <person name="Lobo N.F."/>
            <person name="Campbell K.S."/>
            <person name="Brown S.E."/>
            <person name="Bonaldo M.F."/>
            <person name="Zhu J."/>
            <person name="Sinkins S.P."/>
            <person name="Hogenkamp D.G."/>
            <person name="Amedeo P."/>
            <person name="Arensburger P."/>
            <person name="Atkinson P.W."/>
            <person name="Bidwell S.L."/>
            <person name="Biedler J."/>
            <person name="Birney E."/>
            <person name="Bruggner R.V."/>
            <person name="Costas J."/>
            <person name="Coy M.R."/>
            <person name="Crabtree J."/>
            <person name="Crawford M."/>
            <person name="DeBruyn B."/>
            <person name="DeCaprio D."/>
            <person name="Eiglmeier K."/>
            <person name="Eisenstadt E."/>
            <person name="El-Dorry H."/>
            <person name="Gelbart W.M."/>
            <person name="Gomes S.L."/>
            <person name="Hammond M."/>
            <person name="Hannick L.I."/>
            <person name="Hogan J.R."/>
            <person name="Holmes M.H."/>
            <person name="Jaffe D."/>
            <person name="Johnston S.J."/>
            <person name="Kennedy R.C."/>
            <person name="Koo H."/>
            <person name="Kravitz S."/>
            <person name="Kriventseva E.V."/>
            <person name="Kulp D."/>
            <person name="Labutti K."/>
            <person name="Lee E."/>
            <person name="Li S."/>
            <person name="Lovin D.D."/>
            <person name="Mao C."/>
            <person name="Mauceli E."/>
            <person name="Menck C.F."/>
            <person name="Miller J.R."/>
            <person name="Montgomery P."/>
            <person name="Mori A."/>
            <person name="Nascimento A.L."/>
            <person name="Naveira H.F."/>
            <person name="Nusbaum C."/>
            <person name="O'Leary S.B."/>
            <person name="Orvis J."/>
            <person name="Pertea M."/>
            <person name="Quesneville H."/>
            <person name="Reidenbach K.R."/>
            <person name="Rogers Y.-H.C."/>
            <person name="Roth C.W."/>
            <person name="Schneider J.R."/>
            <person name="Schatz M."/>
            <person name="Shumway M."/>
            <person name="Stanke M."/>
            <person name="Stinson E.O."/>
            <person name="Tubio J.M.C."/>
            <person name="Vanzee J.P."/>
            <person name="Verjovski-Almeida S."/>
            <person name="Werner D."/>
            <person name="White O.R."/>
            <person name="Wyder S."/>
            <person name="Zeng Q."/>
            <person name="Zhao Q."/>
            <person name="Zhao Y."/>
            <person name="Hill C.A."/>
            <person name="Raikhel A.S."/>
            <person name="Soares M.B."/>
            <person name="Knudson D.L."/>
            <person name="Lee N.H."/>
            <person name="Galagan J."/>
            <person name="Salzberg S.L."/>
            <person name="Paulsen I.T."/>
            <person name="Dimopoulos G."/>
            <person name="Collins F.H."/>
            <person name="Bruce B."/>
            <person name="Fraser-Liggett C.M."/>
            <person name="Severson D.W."/>
        </authorList>
    </citation>
    <scope>NUCLEOTIDE SEQUENCE [LARGE SCALE GENOMIC DNA]</scope>
    <source>
        <strain>LVPib12</strain>
    </source>
</reference>
<feature type="chain" id="PRO_0000373908" description="Protein arginine N-methyltransferase 7">
    <location>
        <begin position="1"/>
        <end position="686"/>
    </location>
</feature>
<feature type="domain" description="SAM-dependent MTase PRMT-type 1" evidence="2">
    <location>
        <begin position="5"/>
        <end position="352"/>
    </location>
</feature>
<feature type="domain" description="SAM-dependent MTase PRMT-type 2" evidence="2">
    <location>
        <begin position="357"/>
        <end position="686"/>
    </location>
</feature>
<organism>
    <name type="scientific">Aedes aegypti</name>
    <name type="common">Yellowfever mosquito</name>
    <name type="synonym">Culex aegypti</name>
    <dbReference type="NCBI Taxonomy" id="7159"/>
    <lineage>
        <taxon>Eukaryota</taxon>
        <taxon>Metazoa</taxon>
        <taxon>Ecdysozoa</taxon>
        <taxon>Arthropoda</taxon>
        <taxon>Hexapoda</taxon>
        <taxon>Insecta</taxon>
        <taxon>Pterygota</taxon>
        <taxon>Neoptera</taxon>
        <taxon>Endopterygota</taxon>
        <taxon>Diptera</taxon>
        <taxon>Nematocera</taxon>
        <taxon>Culicoidea</taxon>
        <taxon>Culicidae</taxon>
        <taxon>Culicinae</taxon>
        <taxon>Aedini</taxon>
        <taxon>Aedes</taxon>
        <taxon>Stegomyia</taxon>
    </lineage>
</organism>